<feature type="chain" id="PRO_1000126919" description="Large ribosomal subunit protein bL9">
    <location>
        <begin position="1"/>
        <end position="147"/>
    </location>
</feature>
<reference key="1">
    <citation type="submission" date="2008-07" db="EMBL/GenBank/DDBJ databases">
        <title>Complete sequence of Geobacter bemidjiensis BEM.</title>
        <authorList>
            <consortium name="US DOE Joint Genome Institute"/>
            <person name="Lucas S."/>
            <person name="Copeland A."/>
            <person name="Lapidus A."/>
            <person name="Glavina del Rio T."/>
            <person name="Dalin E."/>
            <person name="Tice H."/>
            <person name="Bruce D."/>
            <person name="Goodwin L."/>
            <person name="Pitluck S."/>
            <person name="Kiss H."/>
            <person name="Brettin T."/>
            <person name="Detter J.C."/>
            <person name="Han C."/>
            <person name="Kuske C.R."/>
            <person name="Schmutz J."/>
            <person name="Larimer F."/>
            <person name="Land M."/>
            <person name="Hauser L."/>
            <person name="Kyrpides N."/>
            <person name="Lykidis A."/>
            <person name="Lovley D."/>
            <person name="Richardson P."/>
        </authorList>
    </citation>
    <scope>NUCLEOTIDE SEQUENCE [LARGE SCALE GENOMIC DNA]</scope>
    <source>
        <strain>ATCC BAA-1014 / DSM 16622 / JCM 12645 / Bem</strain>
    </source>
</reference>
<dbReference type="EMBL" id="CP001124">
    <property type="protein sequence ID" value="ACH39765.1"/>
    <property type="molecule type" value="Genomic_DNA"/>
</dbReference>
<dbReference type="RefSeq" id="WP_012531191.1">
    <property type="nucleotide sequence ID" value="NC_011146.1"/>
</dbReference>
<dbReference type="SMR" id="B5EHW6"/>
<dbReference type="STRING" id="404380.Gbem_2761"/>
<dbReference type="KEGG" id="gbm:Gbem_2761"/>
<dbReference type="eggNOG" id="COG0359">
    <property type="taxonomic scope" value="Bacteria"/>
</dbReference>
<dbReference type="HOGENOM" id="CLU_078938_3_0_7"/>
<dbReference type="OrthoDB" id="9788336at2"/>
<dbReference type="Proteomes" id="UP000008825">
    <property type="component" value="Chromosome"/>
</dbReference>
<dbReference type="GO" id="GO:1990904">
    <property type="term" value="C:ribonucleoprotein complex"/>
    <property type="evidence" value="ECO:0007669"/>
    <property type="project" value="UniProtKB-KW"/>
</dbReference>
<dbReference type="GO" id="GO:0005840">
    <property type="term" value="C:ribosome"/>
    <property type="evidence" value="ECO:0007669"/>
    <property type="project" value="UniProtKB-KW"/>
</dbReference>
<dbReference type="GO" id="GO:0019843">
    <property type="term" value="F:rRNA binding"/>
    <property type="evidence" value="ECO:0007669"/>
    <property type="project" value="UniProtKB-UniRule"/>
</dbReference>
<dbReference type="GO" id="GO:0003735">
    <property type="term" value="F:structural constituent of ribosome"/>
    <property type="evidence" value="ECO:0007669"/>
    <property type="project" value="InterPro"/>
</dbReference>
<dbReference type="GO" id="GO:0006412">
    <property type="term" value="P:translation"/>
    <property type="evidence" value="ECO:0007669"/>
    <property type="project" value="UniProtKB-UniRule"/>
</dbReference>
<dbReference type="FunFam" id="3.10.430.100:FF:000006">
    <property type="entry name" value="50S ribosomal protein L9"/>
    <property type="match status" value="1"/>
</dbReference>
<dbReference type="FunFam" id="3.40.5.10:FF:000002">
    <property type="entry name" value="50S ribosomal protein L9"/>
    <property type="match status" value="1"/>
</dbReference>
<dbReference type="Gene3D" id="3.10.430.100">
    <property type="entry name" value="Ribosomal protein L9, C-terminal domain"/>
    <property type="match status" value="1"/>
</dbReference>
<dbReference type="Gene3D" id="3.40.5.10">
    <property type="entry name" value="Ribosomal protein L9, N-terminal domain"/>
    <property type="match status" value="1"/>
</dbReference>
<dbReference type="HAMAP" id="MF_00503">
    <property type="entry name" value="Ribosomal_bL9"/>
    <property type="match status" value="1"/>
</dbReference>
<dbReference type="InterPro" id="IPR000244">
    <property type="entry name" value="Ribosomal_bL9"/>
</dbReference>
<dbReference type="InterPro" id="IPR009027">
    <property type="entry name" value="Ribosomal_bL9/RNase_H1_N"/>
</dbReference>
<dbReference type="InterPro" id="IPR020594">
    <property type="entry name" value="Ribosomal_bL9_bac/chp"/>
</dbReference>
<dbReference type="InterPro" id="IPR020069">
    <property type="entry name" value="Ribosomal_bL9_C"/>
</dbReference>
<dbReference type="InterPro" id="IPR036791">
    <property type="entry name" value="Ribosomal_bL9_C_sf"/>
</dbReference>
<dbReference type="InterPro" id="IPR020070">
    <property type="entry name" value="Ribosomal_bL9_N"/>
</dbReference>
<dbReference type="InterPro" id="IPR036935">
    <property type="entry name" value="Ribosomal_bL9_N_sf"/>
</dbReference>
<dbReference type="NCBIfam" id="TIGR00158">
    <property type="entry name" value="L9"/>
    <property type="match status" value="1"/>
</dbReference>
<dbReference type="PANTHER" id="PTHR21368">
    <property type="entry name" value="50S RIBOSOMAL PROTEIN L9"/>
    <property type="match status" value="1"/>
</dbReference>
<dbReference type="Pfam" id="PF03948">
    <property type="entry name" value="Ribosomal_L9_C"/>
    <property type="match status" value="1"/>
</dbReference>
<dbReference type="Pfam" id="PF01281">
    <property type="entry name" value="Ribosomal_L9_N"/>
    <property type="match status" value="1"/>
</dbReference>
<dbReference type="SUPFAM" id="SSF55658">
    <property type="entry name" value="L9 N-domain-like"/>
    <property type="match status" value="1"/>
</dbReference>
<dbReference type="SUPFAM" id="SSF55653">
    <property type="entry name" value="Ribosomal protein L9 C-domain"/>
    <property type="match status" value="1"/>
</dbReference>
<dbReference type="PROSITE" id="PS00651">
    <property type="entry name" value="RIBOSOMAL_L9"/>
    <property type="match status" value="1"/>
</dbReference>
<keyword id="KW-1185">Reference proteome</keyword>
<keyword id="KW-0687">Ribonucleoprotein</keyword>
<keyword id="KW-0689">Ribosomal protein</keyword>
<keyword id="KW-0694">RNA-binding</keyword>
<keyword id="KW-0699">rRNA-binding</keyword>
<name>RL9_CITBB</name>
<comment type="function">
    <text evidence="1">Binds to the 23S rRNA.</text>
</comment>
<comment type="similarity">
    <text evidence="1">Belongs to the bacterial ribosomal protein bL9 family.</text>
</comment>
<accession>B5EHW6</accession>
<proteinExistence type="inferred from homology"/>
<sequence>MKVILKENVDNLGHIGDIVKVAPGYARNFLLPKGFAIEATEKNAKALEHAKRHLEYKKNKVLEAAKQLAAKIEGLSLSIAHQAGADDRLFGAVTNMELAEQLKANGIEMDRKRIVLAEPIKQLGDFTATVKIHPEVSATLKVAVTKA</sequence>
<organism>
    <name type="scientific">Citrifermentans bemidjiense (strain ATCC BAA-1014 / DSM 16622 / JCM 12645 / Bem)</name>
    <name type="common">Geobacter bemidjiensis</name>
    <dbReference type="NCBI Taxonomy" id="404380"/>
    <lineage>
        <taxon>Bacteria</taxon>
        <taxon>Pseudomonadati</taxon>
        <taxon>Thermodesulfobacteriota</taxon>
        <taxon>Desulfuromonadia</taxon>
        <taxon>Geobacterales</taxon>
        <taxon>Geobacteraceae</taxon>
        <taxon>Citrifermentans</taxon>
    </lineage>
</organism>
<evidence type="ECO:0000255" key="1">
    <source>
        <dbReference type="HAMAP-Rule" id="MF_00503"/>
    </source>
</evidence>
<evidence type="ECO:0000305" key="2"/>
<gene>
    <name evidence="1" type="primary">rplI</name>
    <name type="ordered locus">Gbem_2761</name>
</gene>
<protein>
    <recommendedName>
        <fullName evidence="1">Large ribosomal subunit protein bL9</fullName>
    </recommendedName>
    <alternativeName>
        <fullName evidence="2">50S ribosomal protein L9</fullName>
    </alternativeName>
</protein>